<accession>Q9VN27</accession>
<dbReference type="EC" id="2.3.1.181"/>
<dbReference type="EMBL" id="AE014297">
    <property type="protein sequence ID" value="AAF52124.1"/>
    <property type="molecule type" value="Genomic_DNA"/>
</dbReference>
<dbReference type="EMBL" id="AY094675">
    <property type="protein sequence ID" value="AAM11028.1"/>
    <property type="molecule type" value="mRNA"/>
</dbReference>
<dbReference type="RefSeq" id="NP_001303459.1">
    <property type="nucleotide sequence ID" value="NM_001316530.1"/>
</dbReference>
<dbReference type="RefSeq" id="NP_649472.1">
    <property type="nucleotide sequence ID" value="NM_141215.2"/>
</dbReference>
<dbReference type="SMR" id="Q9VN27"/>
<dbReference type="BioGRID" id="65784">
    <property type="interactions" value="3"/>
</dbReference>
<dbReference type="FunCoup" id="Q9VN27">
    <property type="interactions" value="987"/>
</dbReference>
<dbReference type="IntAct" id="Q9VN27">
    <property type="interactions" value="1"/>
</dbReference>
<dbReference type="STRING" id="7227.FBpp0078583"/>
<dbReference type="SwissPalm" id="Q9VN27"/>
<dbReference type="PaxDb" id="7227-FBpp0078583"/>
<dbReference type="DNASU" id="40565"/>
<dbReference type="EnsemblMetazoa" id="FBtr0078943">
    <property type="protein sequence ID" value="FBpp0078583"/>
    <property type="gene ID" value="FBgn0037251"/>
</dbReference>
<dbReference type="EnsemblMetazoa" id="FBtr0346735">
    <property type="protein sequence ID" value="FBpp0312343"/>
    <property type="gene ID" value="FBgn0037251"/>
</dbReference>
<dbReference type="GeneID" id="40565"/>
<dbReference type="KEGG" id="dme:Dmel_CG9804"/>
<dbReference type="UCSC" id="CG9804-RA">
    <property type="organism name" value="d. melanogaster"/>
</dbReference>
<dbReference type="AGR" id="FB:FBgn0037251"/>
<dbReference type="CTD" id="387787"/>
<dbReference type="FlyBase" id="FBgn0037251">
    <property type="gene designation" value="Lipt2"/>
</dbReference>
<dbReference type="VEuPathDB" id="VectorBase:FBgn0037251"/>
<dbReference type="eggNOG" id="KOG0325">
    <property type="taxonomic scope" value="Eukaryota"/>
</dbReference>
<dbReference type="GeneTree" id="ENSGT00390000006450"/>
<dbReference type="HOGENOM" id="CLU_035168_1_2_1"/>
<dbReference type="InParanoid" id="Q9VN27"/>
<dbReference type="OMA" id="GEVTYHC"/>
<dbReference type="OrthoDB" id="19908at2759"/>
<dbReference type="PhylomeDB" id="Q9VN27"/>
<dbReference type="Reactome" id="R-DME-9857492">
    <property type="pathway name" value="Protein lipoylation"/>
</dbReference>
<dbReference type="UniPathway" id="UPA00538">
    <property type="reaction ID" value="UER00592"/>
</dbReference>
<dbReference type="BioGRID-ORCS" id="40565">
    <property type="hits" value="0 hits in 1 CRISPR screen"/>
</dbReference>
<dbReference type="GenomeRNAi" id="40565"/>
<dbReference type="PRO" id="PR:Q9VN27"/>
<dbReference type="Proteomes" id="UP000000803">
    <property type="component" value="Chromosome 3R"/>
</dbReference>
<dbReference type="Bgee" id="FBgn0037251">
    <property type="expression patterns" value="Expressed in adult anterior midgut class I enteroendocrine cell in adult midgut (Drosophila) and 62 other cell types or tissues"/>
</dbReference>
<dbReference type="ExpressionAtlas" id="Q9VN27">
    <property type="expression patterns" value="baseline and differential"/>
</dbReference>
<dbReference type="GO" id="GO:0005739">
    <property type="term" value="C:mitochondrion"/>
    <property type="evidence" value="ECO:0000250"/>
    <property type="project" value="FlyBase"/>
</dbReference>
<dbReference type="GO" id="GO:0033819">
    <property type="term" value="F:lipoyl(octanoyl) transferase activity"/>
    <property type="evidence" value="ECO:0000250"/>
    <property type="project" value="UniProtKB"/>
</dbReference>
<dbReference type="GO" id="GO:0009249">
    <property type="term" value="P:protein lipoylation"/>
    <property type="evidence" value="ECO:0000250"/>
    <property type="project" value="UniProtKB"/>
</dbReference>
<dbReference type="CDD" id="cd16444">
    <property type="entry name" value="LipB"/>
    <property type="match status" value="1"/>
</dbReference>
<dbReference type="FunFam" id="3.30.930.10:FF:000035">
    <property type="entry name" value="Putative lipoyltransferase 2, mitochondrial"/>
    <property type="match status" value="1"/>
</dbReference>
<dbReference type="Gene3D" id="3.30.930.10">
    <property type="entry name" value="Bira Bifunctional Protein, Domain 2"/>
    <property type="match status" value="1"/>
</dbReference>
<dbReference type="HAMAP" id="MF_00013">
    <property type="entry name" value="LipB"/>
    <property type="match status" value="1"/>
</dbReference>
<dbReference type="InterPro" id="IPR045864">
    <property type="entry name" value="aa-tRNA-synth_II/BPL/LPL"/>
</dbReference>
<dbReference type="InterPro" id="IPR004143">
    <property type="entry name" value="BPL_LPL_catalytic"/>
</dbReference>
<dbReference type="InterPro" id="IPR000544">
    <property type="entry name" value="Octanoyltransferase"/>
</dbReference>
<dbReference type="InterPro" id="IPR020605">
    <property type="entry name" value="Octanoyltransferase_CS"/>
</dbReference>
<dbReference type="NCBIfam" id="TIGR00214">
    <property type="entry name" value="lipB"/>
    <property type="match status" value="1"/>
</dbReference>
<dbReference type="NCBIfam" id="NF010925">
    <property type="entry name" value="PRK14345.1"/>
    <property type="match status" value="1"/>
</dbReference>
<dbReference type="PANTHER" id="PTHR10993:SF7">
    <property type="entry name" value="LIPOYLTRANSFERASE 2, MITOCHONDRIAL-RELATED"/>
    <property type="match status" value="1"/>
</dbReference>
<dbReference type="PANTHER" id="PTHR10993">
    <property type="entry name" value="OCTANOYLTRANSFERASE"/>
    <property type="match status" value="1"/>
</dbReference>
<dbReference type="Pfam" id="PF21948">
    <property type="entry name" value="LplA-B_cat"/>
    <property type="match status" value="1"/>
</dbReference>
<dbReference type="PIRSF" id="PIRSF016262">
    <property type="entry name" value="LPLase"/>
    <property type="match status" value="1"/>
</dbReference>
<dbReference type="SUPFAM" id="SSF55681">
    <property type="entry name" value="Class II aaRS and biotin synthetases"/>
    <property type="match status" value="1"/>
</dbReference>
<dbReference type="PROSITE" id="PS51733">
    <property type="entry name" value="BPL_LPL_CATALYTIC"/>
    <property type="match status" value="1"/>
</dbReference>
<dbReference type="PROSITE" id="PS01313">
    <property type="entry name" value="LIPB"/>
    <property type="match status" value="1"/>
</dbReference>
<organism>
    <name type="scientific">Drosophila melanogaster</name>
    <name type="common">Fruit fly</name>
    <dbReference type="NCBI Taxonomy" id="7227"/>
    <lineage>
        <taxon>Eukaryota</taxon>
        <taxon>Metazoa</taxon>
        <taxon>Ecdysozoa</taxon>
        <taxon>Arthropoda</taxon>
        <taxon>Hexapoda</taxon>
        <taxon>Insecta</taxon>
        <taxon>Pterygota</taxon>
        <taxon>Neoptera</taxon>
        <taxon>Endopterygota</taxon>
        <taxon>Diptera</taxon>
        <taxon>Brachycera</taxon>
        <taxon>Muscomorpha</taxon>
        <taxon>Ephydroidea</taxon>
        <taxon>Drosophilidae</taxon>
        <taxon>Drosophila</taxon>
        <taxon>Sophophora</taxon>
    </lineage>
</organism>
<comment type="function">
    <text evidence="1">Catalyzes the transfer of endogenously produced octanoic acid from octanoyl-acyl-carrier-protein onto the lipoyl domains of lipoate-dependent enzymes. Lipoyl-ACP can also act as a substrate although octanoyl-ACP is likely to be the physiological substrate (By similarity).</text>
</comment>
<comment type="catalytic activity">
    <reaction>
        <text>octanoyl-[ACP] + L-lysyl-[protein] = N(6)-octanoyl-L-lysyl-[protein] + holo-[ACP] + H(+)</text>
        <dbReference type="Rhea" id="RHEA:17665"/>
        <dbReference type="Rhea" id="RHEA-COMP:9636"/>
        <dbReference type="Rhea" id="RHEA-COMP:9685"/>
        <dbReference type="Rhea" id="RHEA-COMP:9752"/>
        <dbReference type="Rhea" id="RHEA-COMP:9928"/>
        <dbReference type="ChEBI" id="CHEBI:15378"/>
        <dbReference type="ChEBI" id="CHEBI:29969"/>
        <dbReference type="ChEBI" id="CHEBI:64479"/>
        <dbReference type="ChEBI" id="CHEBI:78463"/>
        <dbReference type="ChEBI" id="CHEBI:78809"/>
        <dbReference type="EC" id="2.3.1.181"/>
    </reaction>
</comment>
<comment type="pathway">
    <text>Protein modification; protein lipoylation via endogenous pathway; protein N(6)-(lipoyl)lysine from octanoyl-[acyl-carrier-protein]: step 1/2.</text>
</comment>
<comment type="subcellular location">
    <subcellularLocation>
        <location evidence="4">Mitochondrion</location>
    </subcellularLocation>
</comment>
<comment type="miscellaneous">
    <text evidence="1">In the reaction, the free carboxyl group of octanoic acid is attached via an amide linkage to the epsilon-amino group of a specific lysine residue of lipoyl domains of lipoate-dependent enzymes.</text>
</comment>
<comment type="similarity">
    <text evidence="4">Belongs to the LipB family.</text>
</comment>
<feature type="transit peptide" description="Mitochondrion" evidence="2">
    <location>
        <begin position="1"/>
        <end position="28"/>
    </location>
</feature>
<feature type="chain" id="PRO_0000332309" description="Putative lipoyltransferase 2, mitochondrial">
    <location>
        <begin position="29"/>
        <end position="234"/>
    </location>
</feature>
<feature type="domain" description="BPL/LPL catalytic" evidence="3">
    <location>
        <begin position="39"/>
        <end position="220"/>
    </location>
</feature>
<feature type="active site" description="Acyl-thioester intermediate" evidence="1">
    <location>
        <position position="181"/>
    </location>
</feature>
<feature type="binding site" evidence="1">
    <location>
        <begin position="83"/>
        <end position="90"/>
    </location>
    <ligand>
        <name>substrate</name>
    </ligand>
</feature>
<feature type="binding site" evidence="1">
    <location>
        <begin position="150"/>
        <end position="152"/>
    </location>
    <ligand>
        <name>substrate</name>
    </ligand>
</feature>
<feature type="binding site" evidence="1">
    <location>
        <begin position="163"/>
        <end position="165"/>
    </location>
    <ligand>
        <name>substrate</name>
    </ligand>
</feature>
<feature type="site" description="Lowers pKa of active site Cys" evidence="1">
    <location>
        <position position="147"/>
    </location>
</feature>
<evidence type="ECO:0000250" key="1"/>
<evidence type="ECO:0000255" key="2"/>
<evidence type="ECO:0000255" key="3">
    <source>
        <dbReference type="PROSITE-ProRule" id="PRU01067"/>
    </source>
</evidence>
<evidence type="ECO:0000305" key="4"/>
<evidence type="ECO:0000312" key="5">
    <source>
        <dbReference type="FlyBase" id="FBgn0037251"/>
    </source>
</evidence>
<protein>
    <recommendedName>
        <fullName>Putative lipoyltransferase 2, mitochondrial</fullName>
        <ecNumber>2.3.1.181</ecNumber>
    </recommendedName>
    <alternativeName>
        <fullName>Lipoate-protein ligase B</fullName>
    </alternativeName>
    <alternativeName>
        <fullName>Lipoyl/octanoyl transferase</fullName>
    </alternativeName>
    <alternativeName>
        <fullName>Octanoyl-[acyl-carrier-protein]-protein N-octanoyltransferase</fullName>
    </alternativeName>
</protein>
<name>LIPT2_DROME</name>
<gene>
    <name evidence="5" type="primary">Lipt2</name>
    <name evidence="5" type="ORF">CG9804</name>
</gene>
<keyword id="KW-0012">Acyltransferase</keyword>
<keyword id="KW-0496">Mitochondrion</keyword>
<keyword id="KW-1185">Reference proteome</keyword>
<keyword id="KW-0808">Transferase</keyword>
<keyword id="KW-0809">Transit peptide</keyword>
<sequence length="234" mass="26034">MPFVRPLVTVVRAGRHSYSAGLQLQQRLARSNQILNPPAEFRNYLVLQEHDPVYTVGLRTKDYTAQDEDRLRRLGADFHRTDRGGLITFHGPGQLVAYPILHLGQFVPSIRWYVATLERMVVEACHQMGISSAKATKDTGIWVGDNKICAIGIHGSRYVTTHGIGLNCCTDLQWFEHIVPCGIEGKGVTSLSKELDRHFPVEEASGALLNSFAKVFECRLQEHAKKPASSAEIG</sequence>
<proteinExistence type="evidence at transcript level"/>
<reference key="1">
    <citation type="journal article" date="2000" name="Science">
        <title>The genome sequence of Drosophila melanogaster.</title>
        <authorList>
            <person name="Adams M.D."/>
            <person name="Celniker S.E."/>
            <person name="Holt R.A."/>
            <person name="Evans C.A."/>
            <person name="Gocayne J.D."/>
            <person name="Amanatides P.G."/>
            <person name="Scherer S.E."/>
            <person name="Li P.W."/>
            <person name="Hoskins R.A."/>
            <person name="Galle R.F."/>
            <person name="George R.A."/>
            <person name="Lewis S.E."/>
            <person name="Richards S."/>
            <person name="Ashburner M."/>
            <person name="Henderson S.N."/>
            <person name="Sutton G.G."/>
            <person name="Wortman J.R."/>
            <person name="Yandell M.D."/>
            <person name="Zhang Q."/>
            <person name="Chen L.X."/>
            <person name="Brandon R.C."/>
            <person name="Rogers Y.-H.C."/>
            <person name="Blazej R.G."/>
            <person name="Champe M."/>
            <person name="Pfeiffer B.D."/>
            <person name="Wan K.H."/>
            <person name="Doyle C."/>
            <person name="Baxter E.G."/>
            <person name="Helt G."/>
            <person name="Nelson C.R."/>
            <person name="Miklos G.L.G."/>
            <person name="Abril J.F."/>
            <person name="Agbayani A."/>
            <person name="An H.-J."/>
            <person name="Andrews-Pfannkoch C."/>
            <person name="Baldwin D."/>
            <person name="Ballew R.M."/>
            <person name="Basu A."/>
            <person name="Baxendale J."/>
            <person name="Bayraktaroglu L."/>
            <person name="Beasley E.M."/>
            <person name="Beeson K.Y."/>
            <person name="Benos P.V."/>
            <person name="Berman B.P."/>
            <person name="Bhandari D."/>
            <person name="Bolshakov S."/>
            <person name="Borkova D."/>
            <person name="Botchan M.R."/>
            <person name="Bouck J."/>
            <person name="Brokstein P."/>
            <person name="Brottier P."/>
            <person name="Burtis K.C."/>
            <person name="Busam D.A."/>
            <person name="Butler H."/>
            <person name="Cadieu E."/>
            <person name="Center A."/>
            <person name="Chandra I."/>
            <person name="Cherry J.M."/>
            <person name="Cawley S."/>
            <person name="Dahlke C."/>
            <person name="Davenport L.B."/>
            <person name="Davies P."/>
            <person name="de Pablos B."/>
            <person name="Delcher A."/>
            <person name="Deng Z."/>
            <person name="Mays A.D."/>
            <person name="Dew I."/>
            <person name="Dietz S.M."/>
            <person name="Dodson K."/>
            <person name="Doup L.E."/>
            <person name="Downes M."/>
            <person name="Dugan-Rocha S."/>
            <person name="Dunkov B.C."/>
            <person name="Dunn P."/>
            <person name="Durbin K.J."/>
            <person name="Evangelista C.C."/>
            <person name="Ferraz C."/>
            <person name="Ferriera S."/>
            <person name="Fleischmann W."/>
            <person name="Fosler C."/>
            <person name="Gabrielian A.E."/>
            <person name="Garg N.S."/>
            <person name="Gelbart W.M."/>
            <person name="Glasser K."/>
            <person name="Glodek A."/>
            <person name="Gong F."/>
            <person name="Gorrell J.H."/>
            <person name="Gu Z."/>
            <person name="Guan P."/>
            <person name="Harris M."/>
            <person name="Harris N.L."/>
            <person name="Harvey D.A."/>
            <person name="Heiman T.J."/>
            <person name="Hernandez J.R."/>
            <person name="Houck J."/>
            <person name="Hostin D."/>
            <person name="Houston K.A."/>
            <person name="Howland T.J."/>
            <person name="Wei M.-H."/>
            <person name="Ibegwam C."/>
            <person name="Jalali M."/>
            <person name="Kalush F."/>
            <person name="Karpen G.H."/>
            <person name="Ke Z."/>
            <person name="Kennison J.A."/>
            <person name="Ketchum K.A."/>
            <person name="Kimmel B.E."/>
            <person name="Kodira C.D."/>
            <person name="Kraft C.L."/>
            <person name="Kravitz S."/>
            <person name="Kulp D."/>
            <person name="Lai Z."/>
            <person name="Lasko P."/>
            <person name="Lei Y."/>
            <person name="Levitsky A.A."/>
            <person name="Li J.H."/>
            <person name="Li Z."/>
            <person name="Liang Y."/>
            <person name="Lin X."/>
            <person name="Liu X."/>
            <person name="Mattei B."/>
            <person name="McIntosh T.C."/>
            <person name="McLeod M.P."/>
            <person name="McPherson D."/>
            <person name="Merkulov G."/>
            <person name="Milshina N.V."/>
            <person name="Mobarry C."/>
            <person name="Morris J."/>
            <person name="Moshrefi A."/>
            <person name="Mount S.M."/>
            <person name="Moy M."/>
            <person name="Murphy B."/>
            <person name="Murphy L."/>
            <person name="Muzny D.M."/>
            <person name="Nelson D.L."/>
            <person name="Nelson D.R."/>
            <person name="Nelson K.A."/>
            <person name="Nixon K."/>
            <person name="Nusskern D.R."/>
            <person name="Pacleb J.M."/>
            <person name="Palazzolo M."/>
            <person name="Pittman G.S."/>
            <person name="Pan S."/>
            <person name="Pollard J."/>
            <person name="Puri V."/>
            <person name="Reese M.G."/>
            <person name="Reinert K."/>
            <person name="Remington K."/>
            <person name="Saunders R.D.C."/>
            <person name="Scheeler F."/>
            <person name="Shen H."/>
            <person name="Shue B.C."/>
            <person name="Siden-Kiamos I."/>
            <person name="Simpson M."/>
            <person name="Skupski M.P."/>
            <person name="Smith T.J."/>
            <person name="Spier E."/>
            <person name="Spradling A.C."/>
            <person name="Stapleton M."/>
            <person name="Strong R."/>
            <person name="Sun E."/>
            <person name="Svirskas R."/>
            <person name="Tector C."/>
            <person name="Turner R."/>
            <person name="Venter E."/>
            <person name="Wang A.H."/>
            <person name="Wang X."/>
            <person name="Wang Z.-Y."/>
            <person name="Wassarman D.A."/>
            <person name="Weinstock G.M."/>
            <person name="Weissenbach J."/>
            <person name="Williams S.M."/>
            <person name="Woodage T."/>
            <person name="Worley K.C."/>
            <person name="Wu D."/>
            <person name="Yang S."/>
            <person name="Yao Q.A."/>
            <person name="Ye J."/>
            <person name="Yeh R.-F."/>
            <person name="Zaveri J.S."/>
            <person name="Zhan M."/>
            <person name="Zhang G."/>
            <person name="Zhao Q."/>
            <person name="Zheng L."/>
            <person name="Zheng X.H."/>
            <person name="Zhong F.N."/>
            <person name="Zhong W."/>
            <person name="Zhou X."/>
            <person name="Zhu S.C."/>
            <person name="Zhu X."/>
            <person name="Smith H.O."/>
            <person name="Gibbs R.A."/>
            <person name="Myers E.W."/>
            <person name="Rubin G.M."/>
            <person name="Venter J.C."/>
        </authorList>
    </citation>
    <scope>NUCLEOTIDE SEQUENCE [LARGE SCALE GENOMIC DNA]</scope>
    <source>
        <strain>Berkeley</strain>
    </source>
</reference>
<reference key="2">
    <citation type="journal article" date="2002" name="Genome Biol.">
        <title>Annotation of the Drosophila melanogaster euchromatic genome: a systematic review.</title>
        <authorList>
            <person name="Misra S."/>
            <person name="Crosby M.A."/>
            <person name="Mungall C.J."/>
            <person name="Matthews B.B."/>
            <person name="Campbell K.S."/>
            <person name="Hradecky P."/>
            <person name="Huang Y."/>
            <person name="Kaminker J.S."/>
            <person name="Millburn G.H."/>
            <person name="Prochnik S.E."/>
            <person name="Smith C.D."/>
            <person name="Tupy J.L."/>
            <person name="Whitfield E.J."/>
            <person name="Bayraktaroglu L."/>
            <person name="Berman B.P."/>
            <person name="Bettencourt B.R."/>
            <person name="Celniker S.E."/>
            <person name="de Grey A.D.N.J."/>
            <person name="Drysdale R.A."/>
            <person name="Harris N.L."/>
            <person name="Richter J."/>
            <person name="Russo S."/>
            <person name="Schroeder A.J."/>
            <person name="Shu S.Q."/>
            <person name="Stapleton M."/>
            <person name="Yamada C."/>
            <person name="Ashburner M."/>
            <person name="Gelbart W.M."/>
            <person name="Rubin G.M."/>
            <person name="Lewis S.E."/>
        </authorList>
    </citation>
    <scope>GENOME REANNOTATION</scope>
    <source>
        <strain>Berkeley</strain>
    </source>
</reference>
<reference key="3">
    <citation type="journal article" date="2002" name="Genome Biol.">
        <title>A Drosophila full-length cDNA resource.</title>
        <authorList>
            <person name="Stapleton M."/>
            <person name="Carlson J.W."/>
            <person name="Brokstein P."/>
            <person name="Yu C."/>
            <person name="Champe M."/>
            <person name="George R.A."/>
            <person name="Guarin H."/>
            <person name="Kronmiller B."/>
            <person name="Pacleb J.M."/>
            <person name="Park S."/>
            <person name="Wan K.H."/>
            <person name="Rubin G.M."/>
            <person name="Celniker S.E."/>
        </authorList>
    </citation>
    <scope>NUCLEOTIDE SEQUENCE [LARGE SCALE MRNA]</scope>
    <source>
        <strain>Berkeley</strain>
        <tissue>Head</tissue>
    </source>
</reference>